<sequence length="347" mass="40265">MRCRRLALGLGFSLLSGIALWSLWIYMETWLPFSYVPYYLPCPEIFNMKLQYKGEKPFQPVTRSPHPQPKLLEQRPTELLTLTPWLAPIVSEGTFNPELLQHIYQPLNLTIGLTVFAVGKYTRFVQHFLESAEQFFMQGYQVYYYIFTNDPAGIPRVPLGPGRLLSIIPIQRHSRWEEISTRRMETISRHIAQRAHREVDYLFCVDVDMVFRNPWGPETLGDLVAAIHPGYYAVPRQQFPYERRHISTAFVAENEGDFYYGGAVFGGRVAKVYEFTTGCHMAILADKANGIMAAWQEESHLNRRFISHKPSKVLSPEYLWDDRKPQPPSLKLIRFSTLDKATSWLRS</sequence>
<feature type="chain" id="PRO_0000157294" description="Globoside alpha-1,3-N-acetylgalactosaminyltransferase 1">
    <location>
        <begin position="1"/>
        <end position="347"/>
    </location>
</feature>
<feature type="topological domain" description="Cytoplasmic" evidence="4">
    <location>
        <begin position="1"/>
        <end position="5"/>
    </location>
</feature>
<feature type="transmembrane region" description="Helical; Signal-anchor for type II membrane protein" evidence="4">
    <location>
        <begin position="6"/>
        <end position="26"/>
    </location>
</feature>
<feature type="topological domain" description="Lumenal" evidence="4">
    <location>
        <begin position="27"/>
        <end position="347"/>
    </location>
</feature>
<feature type="active site" description="Nucleophile" evidence="2">
    <location>
        <position position="298"/>
    </location>
</feature>
<feature type="binding site" evidence="2">
    <location>
        <begin position="116"/>
        <end position="121"/>
    </location>
    <ligand>
        <name>substrate</name>
    </ligand>
</feature>
<feature type="binding site" evidence="2">
    <location>
        <begin position="206"/>
        <end position="208"/>
    </location>
    <ligand>
        <name>substrate</name>
    </ligand>
</feature>
<feature type="binding site" evidence="2">
    <location>
        <position position="206"/>
    </location>
    <ligand>
        <name>Mn(2+)</name>
        <dbReference type="ChEBI" id="CHEBI:29035"/>
    </ligand>
</feature>
<feature type="binding site" evidence="2">
    <location>
        <position position="208"/>
    </location>
    <ligand>
        <name>Mn(2+)</name>
        <dbReference type="ChEBI" id="CHEBI:29035"/>
    </ligand>
</feature>
<feature type="binding site" evidence="2">
    <location>
        <begin position="228"/>
        <end position="231"/>
    </location>
    <ligand>
        <name>substrate</name>
    </ligand>
</feature>
<feature type="glycosylation site" description="N-linked (GlcNAc...) asparagine" evidence="4">
    <location>
        <position position="108"/>
    </location>
</feature>
<accession>Q95158</accession>
<protein>
    <recommendedName>
        <fullName evidence="3">Globoside alpha-1,3-N-acetylgalactosaminyltransferase 1</fullName>
        <ecNumber evidence="6">2.4.1.88</ecNumber>
    </recommendedName>
    <alternativeName>
        <fullName evidence="7">Forssman glycolipid synthase</fullName>
    </alternativeName>
</protein>
<organism>
    <name type="scientific">Canis lupus familiaris</name>
    <name type="common">Dog</name>
    <name type="synonym">Canis familiaris</name>
    <dbReference type="NCBI Taxonomy" id="9615"/>
    <lineage>
        <taxon>Eukaryota</taxon>
        <taxon>Metazoa</taxon>
        <taxon>Chordata</taxon>
        <taxon>Craniata</taxon>
        <taxon>Vertebrata</taxon>
        <taxon>Euteleostomi</taxon>
        <taxon>Mammalia</taxon>
        <taxon>Eutheria</taxon>
        <taxon>Laurasiatheria</taxon>
        <taxon>Carnivora</taxon>
        <taxon>Caniformia</taxon>
        <taxon>Canidae</taxon>
        <taxon>Canis</taxon>
    </lineage>
</organism>
<comment type="function">
    <text evidence="5 6">Catalyzes the formation of Forssman glycolipid via the addition of N-acetylgalactosamine (GalNAc) in alpha-1,3-linkage to GalNAcb-1,3Gala-1,4Galb-1,4GlcCer (Gb4Cer) (PubMed:10506200, PubMed:8855242). Forssman glycolipid (also called Forssman antigen; FG) probably serves for adherence of some pathogens such as E.coli uropathogenic strains (PubMed:10506200).</text>
</comment>
<comment type="catalytic activity">
    <reaction evidence="6">
        <text>a globoside Gb4Cer (d18:1(4E)) + UDP-N-acetyl-alpha-D-galactosamine = a globoside Forssman (d18:1(4E)) + UDP + H(+)</text>
        <dbReference type="Rhea" id="RHEA:22164"/>
        <dbReference type="ChEBI" id="CHEBI:15378"/>
        <dbReference type="ChEBI" id="CHEBI:18056"/>
        <dbReference type="ChEBI" id="CHEBI:18259"/>
        <dbReference type="ChEBI" id="CHEBI:58223"/>
        <dbReference type="ChEBI" id="CHEBI:67138"/>
        <dbReference type="EC" id="2.4.1.88"/>
    </reaction>
    <physiologicalReaction direction="left-to-right" evidence="9">
        <dbReference type="Rhea" id="RHEA:22165"/>
    </physiologicalReaction>
</comment>
<comment type="catalytic activity">
    <reaction evidence="5 6">
        <text>a globoside Gb4Cer + UDP-N-acetyl-alpha-D-galactosamine = a globoside IV3GalNAc-Gb4Cer + UDP + H(+)</text>
        <dbReference type="Rhea" id="RHEA:56568"/>
        <dbReference type="ChEBI" id="CHEBI:15378"/>
        <dbReference type="ChEBI" id="CHEBI:58223"/>
        <dbReference type="ChEBI" id="CHEBI:67138"/>
        <dbReference type="ChEBI" id="CHEBI:88167"/>
        <dbReference type="ChEBI" id="CHEBI:90400"/>
    </reaction>
    <physiologicalReaction direction="left-to-right" evidence="9">
        <dbReference type="Rhea" id="RHEA:56569"/>
    </physiologicalReaction>
</comment>
<comment type="cofactor">
    <cofactor evidence="2">
        <name>Mn(2+)</name>
        <dbReference type="ChEBI" id="CHEBI:29035"/>
    </cofactor>
    <text evidence="2">Binds 1 Mn(2+) ion per subunit.</text>
</comment>
<comment type="pathway">
    <text>Protein modification; protein glycosylation.</text>
</comment>
<comment type="subcellular location">
    <subcellularLocation>
        <location evidence="1">Golgi apparatus membrane</location>
        <topology evidence="1">Single-pass type II membrane protein</topology>
    </subcellularLocation>
</comment>
<comment type="domain">
    <text evidence="1">The conserved DXD motif is involved in cofactor binding. The manganese ion interacts with the beta-phosphate group of UDP and may also have a role in catalysis (By similarity).</text>
</comment>
<comment type="similarity">
    <text evidence="8">Belongs to the glycosyltransferase 6 family.</text>
</comment>
<name>GBGT1_CANLF</name>
<dbReference type="EC" id="2.4.1.88" evidence="6"/>
<dbReference type="EMBL" id="U66140">
    <property type="protein sequence ID" value="AAC48667.1"/>
    <property type="molecule type" value="mRNA"/>
</dbReference>
<dbReference type="PIR" id="JC6126">
    <property type="entry name" value="JC6126"/>
</dbReference>
<dbReference type="RefSeq" id="NP_001003193.1">
    <property type="nucleotide sequence ID" value="NM_001003193.1"/>
</dbReference>
<dbReference type="SMR" id="Q95158"/>
<dbReference type="STRING" id="9615.ENSCAFP00000061738"/>
<dbReference type="SwissLipids" id="SLP:000001913"/>
<dbReference type="CAZy" id="GT6">
    <property type="family name" value="Glycosyltransferase Family 6"/>
</dbReference>
<dbReference type="GlyCosmos" id="Q95158">
    <property type="glycosylation" value="1 site, No reported glycans"/>
</dbReference>
<dbReference type="PaxDb" id="9612-ENSCAFP00000029424"/>
<dbReference type="GeneID" id="403833"/>
<dbReference type="KEGG" id="cfa:403833"/>
<dbReference type="CTD" id="26301"/>
<dbReference type="eggNOG" id="ENOG502QQAJ">
    <property type="taxonomic scope" value="Eukaryota"/>
</dbReference>
<dbReference type="InParanoid" id="Q95158"/>
<dbReference type="OrthoDB" id="10013941at2759"/>
<dbReference type="BRENDA" id="2.4.1.88">
    <property type="organism ID" value="1153"/>
</dbReference>
<dbReference type="UniPathway" id="UPA00378"/>
<dbReference type="Proteomes" id="UP000002254">
    <property type="component" value="Unplaced"/>
</dbReference>
<dbReference type="Proteomes" id="UP000694429">
    <property type="component" value="Unplaced"/>
</dbReference>
<dbReference type="Proteomes" id="UP000694542">
    <property type="component" value="Unplaced"/>
</dbReference>
<dbReference type="Proteomes" id="UP000805418">
    <property type="component" value="Unplaced"/>
</dbReference>
<dbReference type="GO" id="GO:0005794">
    <property type="term" value="C:Golgi apparatus"/>
    <property type="evidence" value="ECO:0000318"/>
    <property type="project" value="GO_Central"/>
</dbReference>
<dbReference type="GO" id="GO:0000139">
    <property type="term" value="C:Golgi membrane"/>
    <property type="evidence" value="ECO:0007669"/>
    <property type="project" value="UniProtKB-SubCell"/>
</dbReference>
<dbReference type="GO" id="GO:0031982">
    <property type="term" value="C:vesicle"/>
    <property type="evidence" value="ECO:0000318"/>
    <property type="project" value="GO_Central"/>
</dbReference>
<dbReference type="GO" id="GO:0047277">
    <property type="term" value="F:globoside alpha-N-acetylgalactosaminyltransferase activity"/>
    <property type="evidence" value="ECO:0000314"/>
    <property type="project" value="UniProtKB"/>
</dbReference>
<dbReference type="GO" id="GO:0046872">
    <property type="term" value="F:metal ion binding"/>
    <property type="evidence" value="ECO:0007669"/>
    <property type="project" value="UniProtKB-KW"/>
</dbReference>
<dbReference type="GO" id="GO:0005975">
    <property type="term" value="P:carbohydrate metabolic process"/>
    <property type="evidence" value="ECO:0007669"/>
    <property type="project" value="InterPro"/>
</dbReference>
<dbReference type="GO" id="GO:0001575">
    <property type="term" value="P:globoside metabolic process"/>
    <property type="evidence" value="ECO:0000314"/>
    <property type="project" value="UniProtKB"/>
</dbReference>
<dbReference type="GO" id="GO:0030259">
    <property type="term" value="P:lipid glycosylation"/>
    <property type="evidence" value="ECO:0000318"/>
    <property type="project" value="GO_Central"/>
</dbReference>
<dbReference type="GO" id="GO:0006486">
    <property type="term" value="P:protein glycosylation"/>
    <property type="evidence" value="ECO:0007669"/>
    <property type="project" value="UniProtKB-UniPathway"/>
</dbReference>
<dbReference type="CDD" id="cd02515">
    <property type="entry name" value="Glyco_transf_6"/>
    <property type="match status" value="1"/>
</dbReference>
<dbReference type="FunFam" id="3.90.550.10:FF:000022">
    <property type="entry name" value="Histo-blood group ABO system transferase"/>
    <property type="match status" value="1"/>
</dbReference>
<dbReference type="Gene3D" id="3.90.550.10">
    <property type="entry name" value="Spore Coat Polysaccharide Biosynthesis Protein SpsA, Chain A"/>
    <property type="match status" value="1"/>
</dbReference>
<dbReference type="InterPro" id="IPR005076">
    <property type="entry name" value="Glyco_trans_6"/>
</dbReference>
<dbReference type="InterPro" id="IPR029044">
    <property type="entry name" value="Nucleotide-diphossugar_trans"/>
</dbReference>
<dbReference type="PANTHER" id="PTHR10462:SF49">
    <property type="entry name" value="GLOBOSIDE ALPHA-1,3-N-ACETYLGALACTOSAMINYLTRANSFERASE 1"/>
    <property type="match status" value="1"/>
</dbReference>
<dbReference type="PANTHER" id="PTHR10462">
    <property type="entry name" value="GLYCOSYLTRANSFERASE-RELATED"/>
    <property type="match status" value="1"/>
</dbReference>
<dbReference type="Pfam" id="PF03414">
    <property type="entry name" value="Glyco_transf_6"/>
    <property type="match status" value="1"/>
</dbReference>
<dbReference type="SUPFAM" id="SSF53448">
    <property type="entry name" value="Nucleotide-diphospho-sugar transferases"/>
    <property type="match status" value="1"/>
</dbReference>
<gene>
    <name evidence="3" type="primary">GBGT1</name>
    <name evidence="7" type="synonym">FS</name>
</gene>
<proteinExistence type="evidence at protein level"/>
<reference key="1">
    <citation type="journal article" date="1996" name="Proc. Natl. Acad. Sci. U.S.A.">
        <title>Expression cloning of Forssman glycolipid synthetase: a novel member of the histo-blood group ABO gene family.</title>
        <authorList>
            <person name="Haslam D.B."/>
            <person name="Baenziger J.U."/>
        </authorList>
    </citation>
    <scope>NUCLEOTIDE SEQUENCE [MRNA]</scope>
    <scope>CATALYTIC ACTIVITY</scope>
    <scope>FUNCTION</scope>
    <source>
        <tissue>Kidney</tissue>
    </source>
</reference>
<reference key="2">
    <citation type="journal article" date="1999" name="J. Biol. Chem.">
        <title>Characterization of the human Forssman synthetase gene: an evolving association between glycolipid synthesis and host-microbial interactions.</title>
        <authorList>
            <person name="Xu H."/>
            <person name="Storch T."/>
            <person name="Yu M."/>
            <person name="Elliott S.P."/>
            <person name="Haslam D.B."/>
        </authorList>
    </citation>
    <scope>CATALYTIC ACTIVITY</scope>
    <scope>FUNCTION</scope>
    <source>
        <tissue>Substantia nigra</tissue>
    </source>
</reference>
<evidence type="ECO:0000250" key="1"/>
<evidence type="ECO:0000250" key="2">
    <source>
        <dbReference type="UniProtKB" id="P14769"/>
    </source>
</evidence>
<evidence type="ECO:0000250" key="3">
    <source>
        <dbReference type="UniProtKB" id="Q8VI38"/>
    </source>
</evidence>
<evidence type="ECO:0000255" key="4"/>
<evidence type="ECO:0000269" key="5">
    <source>
    </source>
</evidence>
<evidence type="ECO:0000269" key="6">
    <source>
    </source>
</evidence>
<evidence type="ECO:0000303" key="7">
    <source>
    </source>
</evidence>
<evidence type="ECO:0000305" key="8"/>
<evidence type="ECO:0000305" key="9">
    <source>
    </source>
</evidence>
<keyword id="KW-0325">Glycoprotein</keyword>
<keyword id="KW-0328">Glycosyltransferase</keyword>
<keyword id="KW-0333">Golgi apparatus</keyword>
<keyword id="KW-0464">Manganese</keyword>
<keyword id="KW-0472">Membrane</keyword>
<keyword id="KW-0479">Metal-binding</keyword>
<keyword id="KW-1185">Reference proteome</keyword>
<keyword id="KW-0735">Signal-anchor</keyword>
<keyword id="KW-0808">Transferase</keyword>
<keyword id="KW-0812">Transmembrane</keyword>
<keyword id="KW-1133">Transmembrane helix</keyword>